<protein>
    <recommendedName>
        <fullName evidence="1">Phosphopentomutase</fullName>
        <ecNumber evidence="1">5.4.2.7</ecNumber>
    </recommendedName>
    <alternativeName>
        <fullName evidence="1">Phosphodeoxyribomutase</fullName>
    </alternativeName>
</protein>
<feature type="chain" id="PRO_1000133091" description="Phosphopentomutase">
    <location>
        <begin position="1"/>
        <end position="406"/>
    </location>
</feature>
<feature type="binding site" evidence="1">
    <location>
        <position position="10"/>
    </location>
    <ligand>
        <name>Mn(2+)</name>
        <dbReference type="ChEBI" id="CHEBI:29035"/>
        <label>1</label>
    </ligand>
</feature>
<feature type="binding site" evidence="1">
    <location>
        <position position="305"/>
    </location>
    <ligand>
        <name>Mn(2+)</name>
        <dbReference type="ChEBI" id="CHEBI:29035"/>
        <label>2</label>
    </ligand>
</feature>
<feature type="binding site" evidence="1">
    <location>
        <position position="310"/>
    </location>
    <ligand>
        <name>Mn(2+)</name>
        <dbReference type="ChEBI" id="CHEBI:29035"/>
        <label>2</label>
    </ligand>
</feature>
<feature type="binding site" evidence="1">
    <location>
        <position position="346"/>
    </location>
    <ligand>
        <name>Mn(2+)</name>
        <dbReference type="ChEBI" id="CHEBI:29035"/>
        <label>1</label>
    </ligand>
</feature>
<feature type="binding site" evidence="1">
    <location>
        <position position="347"/>
    </location>
    <ligand>
        <name>Mn(2+)</name>
        <dbReference type="ChEBI" id="CHEBI:29035"/>
        <label>1</label>
    </ligand>
</feature>
<feature type="binding site" evidence="1">
    <location>
        <position position="358"/>
    </location>
    <ligand>
        <name>Mn(2+)</name>
        <dbReference type="ChEBI" id="CHEBI:29035"/>
        <label>2</label>
    </ligand>
</feature>
<name>DEOB_RHILW</name>
<sequence>MARAFLFVLDSFGVGGAPDAAAYGDEGADTLGHIAEFCAAGAGDRAGLRDGPLSLPNLSELGLMQIARSASGRFPAGMPIPEKVYGIYGAATEISRGKDTPSGHWEIAGTPVSFDWGYFPTEGDAFPEELIEALCRDAGVSGILGNCHASGTEIIARLGEEHIRTGKPICYTSSDSVFQVAAHEVHFGLDRLLAFCQVARGLLDRYNIGRVIARPFIGHSSSTFQRTGNRRDFSVLPPEPTLLDRLIEHGRHVHAVGKIGDIFAHQGISRLIKANGNEALMDATLATIDEAEDGDLVFTNFVDFDMVYGHRRDVPGYAAALEAFDARLAEVHKKLKPGDLVVLTADHGCDPTWRGTDHTRERVPVIAYGPGIRSRSIGVRRSYADIGESIARHLGIPAGPHGRSFL</sequence>
<keyword id="KW-0963">Cytoplasm</keyword>
<keyword id="KW-0413">Isomerase</keyword>
<keyword id="KW-0464">Manganese</keyword>
<keyword id="KW-0479">Metal-binding</keyword>
<keyword id="KW-1185">Reference proteome</keyword>
<comment type="function">
    <text evidence="1">Isomerase that catalyzes the conversion of deoxy-ribose 1-phosphate (dRib-1-P) and ribose 1-phosphate (Rib-1-P) to deoxy-ribose 5-phosphate (dRib-5-P) and ribose 5-phosphate (Rib-5-P), respectively.</text>
</comment>
<comment type="catalytic activity">
    <reaction evidence="1">
        <text>2-deoxy-alpha-D-ribose 1-phosphate = 2-deoxy-D-ribose 5-phosphate</text>
        <dbReference type="Rhea" id="RHEA:27658"/>
        <dbReference type="ChEBI" id="CHEBI:57259"/>
        <dbReference type="ChEBI" id="CHEBI:62877"/>
        <dbReference type="EC" id="5.4.2.7"/>
    </reaction>
</comment>
<comment type="catalytic activity">
    <reaction evidence="1">
        <text>alpha-D-ribose 1-phosphate = D-ribose 5-phosphate</text>
        <dbReference type="Rhea" id="RHEA:18793"/>
        <dbReference type="ChEBI" id="CHEBI:57720"/>
        <dbReference type="ChEBI" id="CHEBI:78346"/>
        <dbReference type="EC" id="5.4.2.7"/>
    </reaction>
</comment>
<comment type="cofactor">
    <cofactor evidence="1">
        <name>Mn(2+)</name>
        <dbReference type="ChEBI" id="CHEBI:29035"/>
    </cofactor>
    <text evidence="1">Binds 2 manganese ions.</text>
</comment>
<comment type="pathway">
    <text evidence="1">Carbohydrate degradation; 2-deoxy-D-ribose 1-phosphate degradation; D-glyceraldehyde 3-phosphate and acetaldehyde from 2-deoxy-alpha-D-ribose 1-phosphate: step 1/2.</text>
</comment>
<comment type="subcellular location">
    <subcellularLocation>
        <location evidence="1">Cytoplasm</location>
    </subcellularLocation>
</comment>
<comment type="similarity">
    <text evidence="1">Belongs to the phosphopentomutase family.</text>
</comment>
<evidence type="ECO:0000255" key="1">
    <source>
        <dbReference type="HAMAP-Rule" id="MF_00740"/>
    </source>
</evidence>
<reference key="1">
    <citation type="journal article" date="2010" name="Stand. Genomic Sci.">
        <title>Complete genome sequence of Rhizobium leguminosarum bv trifolii strain WSM2304, an effective microsymbiont of the South American clover Trifolium polymorphum.</title>
        <authorList>
            <person name="Reeve W."/>
            <person name="O'Hara G."/>
            <person name="Chain P."/>
            <person name="Ardley J."/>
            <person name="Brau L."/>
            <person name="Nandesena K."/>
            <person name="Tiwari R."/>
            <person name="Malfatti S."/>
            <person name="Kiss H."/>
            <person name="Lapidus A."/>
            <person name="Copeland A."/>
            <person name="Nolan M."/>
            <person name="Land M."/>
            <person name="Ivanova N."/>
            <person name="Mavromatis K."/>
            <person name="Markowitz V."/>
            <person name="Kyrpides N."/>
            <person name="Melino V."/>
            <person name="Denton M."/>
            <person name="Yates R."/>
            <person name="Howieson J."/>
        </authorList>
    </citation>
    <scope>NUCLEOTIDE SEQUENCE [LARGE SCALE GENOMIC DNA]</scope>
    <source>
        <strain>WSM2304</strain>
    </source>
</reference>
<organism>
    <name type="scientific">Rhizobium leguminosarum bv. trifolii (strain WSM2304)</name>
    <dbReference type="NCBI Taxonomy" id="395492"/>
    <lineage>
        <taxon>Bacteria</taxon>
        <taxon>Pseudomonadati</taxon>
        <taxon>Pseudomonadota</taxon>
        <taxon>Alphaproteobacteria</taxon>
        <taxon>Hyphomicrobiales</taxon>
        <taxon>Rhizobiaceae</taxon>
        <taxon>Rhizobium/Agrobacterium group</taxon>
        <taxon>Rhizobium</taxon>
    </lineage>
</organism>
<proteinExistence type="inferred from homology"/>
<accession>B5ZXI4</accession>
<gene>
    <name evidence="1" type="primary">deoB</name>
    <name type="ordered locus">Rleg2_4181</name>
</gene>
<dbReference type="EC" id="5.4.2.7" evidence="1"/>
<dbReference type="EMBL" id="CP001191">
    <property type="protein sequence ID" value="ACI57443.1"/>
    <property type="molecule type" value="Genomic_DNA"/>
</dbReference>
<dbReference type="RefSeq" id="WP_012559571.1">
    <property type="nucleotide sequence ID" value="NC_011369.1"/>
</dbReference>
<dbReference type="SMR" id="B5ZXI4"/>
<dbReference type="STRING" id="395492.Rleg2_4181"/>
<dbReference type="KEGG" id="rlt:Rleg2_4181"/>
<dbReference type="eggNOG" id="COG1015">
    <property type="taxonomic scope" value="Bacteria"/>
</dbReference>
<dbReference type="HOGENOM" id="CLU_053861_0_0_5"/>
<dbReference type="UniPathway" id="UPA00002">
    <property type="reaction ID" value="UER00467"/>
</dbReference>
<dbReference type="Proteomes" id="UP000008330">
    <property type="component" value="Chromosome"/>
</dbReference>
<dbReference type="GO" id="GO:0005829">
    <property type="term" value="C:cytosol"/>
    <property type="evidence" value="ECO:0007669"/>
    <property type="project" value="TreeGrafter"/>
</dbReference>
<dbReference type="GO" id="GO:0000287">
    <property type="term" value="F:magnesium ion binding"/>
    <property type="evidence" value="ECO:0007669"/>
    <property type="project" value="InterPro"/>
</dbReference>
<dbReference type="GO" id="GO:0030145">
    <property type="term" value="F:manganese ion binding"/>
    <property type="evidence" value="ECO:0007669"/>
    <property type="project" value="UniProtKB-UniRule"/>
</dbReference>
<dbReference type="GO" id="GO:0008973">
    <property type="term" value="F:phosphopentomutase activity"/>
    <property type="evidence" value="ECO:0007669"/>
    <property type="project" value="UniProtKB-UniRule"/>
</dbReference>
<dbReference type="GO" id="GO:0006018">
    <property type="term" value="P:2-deoxyribose 1-phosphate catabolic process"/>
    <property type="evidence" value="ECO:0007669"/>
    <property type="project" value="UniProtKB-UniRule"/>
</dbReference>
<dbReference type="GO" id="GO:0006015">
    <property type="term" value="P:5-phosphoribose 1-diphosphate biosynthetic process"/>
    <property type="evidence" value="ECO:0007669"/>
    <property type="project" value="UniProtKB-UniPathway"/>
</dbReference>
<dbReference type="GO" id="GO:0043094">
    <property type="term" value="P:metabolic compound salvage"/>
    <property type="evidence" value="ECO:0007669"/>
    <property type="project" value="InterPro"/>
</dbReference>
<dbReference type="GO" id="GO:0009117">
    <property type="term" value="P:nucleotide metabolic process"/>
    <property type="evidence" value="ECO:0007669"/>
    <property type="project" value="InterPro"/>
</dbReference>
<dbReference type="CDD" id="cd16009">
    <property type="entry name" value="PPM"/>
    <property type="match status" value="1"/>
</dbReference>
<dbReference type="FunFam" id="3.30.70.1250:FF:000001">
    <property type="entry name" value="Phosphopentomutase"/>
    <property type="match status" value="1"/>
</dbReference>
<dbReference type="Gene3D" id="3.40.720.10">
    <property type="entry name" value="Alkaline Phosphatase, subunit A"/>
    <property type="match status" value="1"/>
</dbReference>
<dbReference type="Gene3D" id="3.30.70.1250">
    <property type="entry name" value="Phosphopentomutase"/>
    <property type="match status" value="1"/>
</dbReference>
<dbReference type="HAMAP" id="MF_00740">
    <property type="entry name" value="Phosphopentomut"/>
    <property type="match status" value="1"/>
</dbReference>
<dbReference type="InterPro" id="IPR017850">
    <property type="entry name" value="Alkaline_phosphatase_core_sf"/>
</dbReference>
<dbReference type="InterPro" id="IPR010045">
    <property type="entry name" value="DeoB"/>
</dbReference>
<dbReference type="InterPro" id="IPR006124">
    <property type="entry name" value="Metalloenzyme"/>
</dbReference>
<dbReference type="InterPro" id="IPR024052">
    <property type="entry name" value="Phosphopentomutase_DeoB_cap_sf"/>
</dbReference>
<dbReference type="NCBIfam" id="TIGR01696">
    <property type="entry name" value="deoB"/>
    <property type="match status" value="1"/>
</dbReference>
<dbReference type="NCBIfam" id="NF003766">
    <property type="entry name" value="PRK05362.1"/>
    <property type="match status" value="1"/>
</dbReference>
<dbReference type="PANTHER" id="PTHR21110">
    <property type="entry name" value="PHOSPHOPENTOMUTASE"/>
    <property type="match status" value="1"/>
</dbReference>
<dbReference type="PANTHER" id="PTHR21110:SF0">
    <property type="entry name" value="PHOSPHOPENTOMUTASE"/>
    <property type="match status" value="1"/>
</dbReference>
<dbReference type="Pfam" id="PF01676">
    <property type="entry name" value="Metalloenzyme"/>
    <property type="match status" value="1"/>
</dbReference>
<dbReference type="PIRSF" id="PIRSF001491">
    <property type="entry name" value="Ppentomutase"/>
    <property type="match status" value="1"/>
</dbReference>
<dbReference type="SUPFAM" id="SSF53649">
    <property type="entry name" value="Alkaline phosphatase-like"/>
    <property type="match status" value="1"/>
</dbReference>
<dbReference type="SUPFAM" id="SSF143856">
    <property type="entry name" value="DeoB insert domain-like"/>
    <property type="match status" value="1"/>
</dbReference>